<gene>
    <name type="ORF">GH18976</name>
</gene>
<protein>
    <recommendedName>
        <fullName>MAU2 chromatid cohesion factor homolog</fullName>
    </recommendedName>
    <alternativeName>
        <fullName>Cohesin loading complex subunit SCC4 homolog</fullName>
    </alternativeName>
</protein>
<keyword id="KW-0131">Cell cycle</keyword>
<keyword id="KW-0132">Cell division</keyword>
<keyword id="KW-0159">Chromosome partition</keyword>
<keyword id="KW-0498">Mitosis</keyword>
<keyword id="KW-0539">Nucleus</keyword>
<keyword id="KW-1185">Reference proteome</keyword>
<keyword id="KW-0677">Repeat</keyword>
<keyword id="KW-0802">TPR repeat</keyword>
<proteinExistence type="inferred from homology"/>
<name>SCC4_DROGR</name>
<dbReference type="EMBL" id="CH916369">
    <property type="protein sequence ID" value="EDV92829.1"/>
    <property type="molecule type" value="Genomic_DNA"/>
</dbReference>
<dbReference type="SMR" id="B4JHK2"/>
<dbReference type="FunCoup" id="B4JHK2">
    <property type="interactions" value="2786"/>
</dbReference>
<dbReference type="STRING" id="7222.B4JHK2"/>
<dbReference type="EnsemblMetazoa" id="FBtr0154390">
    <property type="protein sequence ID" value="FBpp0152882"/>
    <property type="gene ID" value="FBgn0126443"/>
</dbReference>
<dbReference type="EnsemblMetazoa" id="XM_001989731.2">
    <property type="protein sequence ID" value="XP_001989767.1"/>
    <property type="gene ID" value="LOC6564191"/>
</dbReference>
<dbReference type="GeneID" id="6564191"/>
<dbReference type="KEGG" id="dgr:6564191"/>
<dbReference type="CTD" id="23383"/>
<dbReference type="eggNOG" id="KOG2300">
    <property type="taxonomic scope" value="Eukaryota"/>
</dbReference>
<dbReference type="HOGENOM" id="CLU_030238_0_0_1"/>
<dbReference type="InParanoid" id="B4JHK2"/>
<dbReference type="OMA" id="QDAWYLS"/>
<dbReference type="OrthoDB" id="5565328at2759"/>
<dbReference type="PhylomeDB" id="B4JHK2"/>
<dbReference type="Proteomes" id="UP000001070">
    <property type="component" value="Unassembled WGS sequence"/>
</dbReference>
<dbReference type="GO" id="GO:0000785">
    <property type="term" value="C:chromatin"/>
    <property type="evidence" value="ECO:0000250"/>
    <property type="project" value="UniProtKB"/>
</dbReference>
<dbReference type="GO" id="GO:0005654">
    <property type="term" value="C:nucleoplasm"/>
    <property type="evidence" value="ECO:0000250"/>
    <property type="project" value="UniProtKB"/>
</dbReference>
<dbReference type="GO" id="GO:0005634">
    <property type="term" value="C:nucleus"/>
    <property type="evidence" value="ECO:0000250"/>
    <property type="project" value="UniProtKB"/>
</dbReference>
<dbReference type="GO" id="GO:0032116">
    <property type="term" value="C:SMC loading complex"/>
    <property type="evidence" value="ECO:0000250"/>
    <property type="project" value="UniProtKB"/>
</dbReference>
<dbReference type="GO" id="GO:0051301">
    <property type="term" value="P:cell division"/>
    <property type="evidence" value="ECO:0007669"/>
    <property type="project" value="UniProtKB-KW"/>
</dbReference>
<dbReference type="GO" id="GO:0007059">
    <property type="term" value="P:chromosome segregation"/>
    <property type="evidence" value="ECO:0007669"/>
    <property type="project" value="UniProtKB-KW"/>
</dbReference>
<dbReference type="GO" id="GO:0034088">
    <property type="term" value="P:maintenance of mitotic sister chromatid cohesion"/>
    <property type="evidence" value="ECO:0000250"/>
    <property type="project" value="UniProtKB"/>
</dbReference>
<dbReference type="FunFam" id="1.25.40.10:FF:000373">
    <property type="entry name" value="MAU2 chromatid cohesion factor homolog"/>
    <property type="match status" value="1"/>
</dbReference>
<dbReference type="FunFam" id="1.25.40.10:FF:000915">
    <property type="entry name" value="MAU2 chromatid cohesion factor homolog"/>
    <property type="match status" value="1"/>
</dbReference>
<dbReference type="Gene3D" id="1.25.40.10">
    <property type="entry name" value="Tetratricopeptide repeat domain"/>
    <property type="match status" value="2"/>
</dbReference>
<dbReference type="InterPro" id="IPR019440">
    <property type="entry name" value="MAU2"/>
</dbReference>
<dbReference type="InterPro" id="IPR011990">
    <property type="entry name" value="TPR-like_helical_dom_sf"/>
</dbReference>
<dbReference type="PANTHER" id="PTHR21394">
    <property type="entry name" value="MAU2 CHROMATID COHESION FACTOR HOMOLOG"/>
    <property type="match status" value="1"/>
</dbReference>
<dbReference type="Pfam" id="PF10345">
    <property type="entry name" value="Cohesin_load"/>
    <property type="match status" value="1"/>
</dbReference>
<dbReference type="SUPFAM" id="SSF48452">
    <property type="entry name" value="TPR-like"/>
    <property type="match status" value="1"/>
</dbReference>
<sequence length="623" mass="70298">MSVANTTAASQDACYISLLGLAEYFRTSQPPNIKKCIQCLQALFTFQPPSKVEARTHLQMGQVLMAYTCNIDLARRHLEQAWSISEPLMNFDDVKFDTASLLAQLHLKTEQSPHAKAMLRRAVELSQNNVYWHCKLLLQLSQIHANDREYSLASDLLAVGAESAEEAGATYLKVLFLLSRAMILMIERKTNDVLALLNSAGQIIDNNIPNPHQKEYLKVFFLVLQVCYYLALGQVKTVKPSLKQLQMSIQTIMAPNWPSDESIFGGNQLEMFVWLPKEQLYVLVYLVTVSHSMMAGYMDKAQKYTEKALTQIEKLKLQEDKSILSVFKVILLEHIVMCRMVMGNRELAIREIAAARDVCLAVPHRSLLKRHSAQLHCLIGLYSMSTSFFEHAERQFLVCVNETGERDLKLFANLNLAIIYLRTKRDADLKQILDAVSTENTHTYSSQALMGGFYYVQGLHAFHKNSFHEAKRFLRETLKMANAEDLNRLTSCSLVLLSHVFLSIGNSKESMNMVTPAMQLASKIPDIHVQLWGSAILKDLHRMSKDVQHEKEAYANHVKYSENLIADQRKCVQSAHHELVNWFQGDPPLTSGASLTHLPVAAAAPEASTSSLQASTAQFGQFY</sequence>
<evidence type="ECO:0000250" key="1"/>
<evidence type="ECO:0000305" key="2"/>
<reference key="1">
    <citation type="journal article" date="2007" name="Nature">
        <title>Evolution of genes and genomes on the Drosophila phylogeny.</title>
        <authorList>
            <consortium name="Drosophila 12 genomes consortium"/>
        </authorList>
    </citation>
    <scope>NUCLEOTIDE SEQUENCE [LARGE SCALE GENOMIC DNA]</scope>
    <source>
        <strain>Tucson 15287-2541.00</strain>
    </source>
</reference>
<accession>B4JHK2</accession>
<comment type="function">
    <text evidence="1">Required for association of the cohesin complex with chromatin during interphase. Plays a role in sister chromatid cohesion and normal progression through prometaphase (By similarity).</text>
</comment>
<comment type="subunit">
    <text evidence="1">Interacts with Nipped-B to form the cohesin loading complex.</text>
</comment>
<comment type="subcellular location">
    <subcellularLocation>
        <location evidence="1">Nucleus</location>
        <location evidence="1">Nucleoplasm</location>
    </subcellularLocation>
    <text evidence="1">Binds to chromatin from the end of mitosis until prophase.</text>
</comment>
<comment type="similarity">
    <text evidence="2">Belongs to the SCC4/mau-2 family.</text>
</comment>
<organism>
    <name type="scientific">Drosophila grimshawi</name>
    <name type="common">Hawaiian fruit fly</name>
    <name type="synonym">Idiomyia grimshawi</name>
    <dbReference type="NCBI Taxonomy" id="7222"/>
    <lineage>
        <taxon>Eukaryota</taxon>
        <taxon>Metazoa</taxon>
        <taxon>Ecdysozoa</taxon>
        <taxon>Arthropoda</taxon>
        <taxon>Hexapoda</taxon>
        <taxon>Insecta</taxon>
        <taxon>Pterygota</taxon>
        <taxon>Neoptera</taxon>
        <taxon>Endopterygota</taxon>
        <taxon>Diptera</taxon>
        <taxon>Brachycera</taxon>
        <taxon>Muscomorpha</taxon>
        <taxon>Ephydroidea</taxon>
        <taxon>Drosophilidae</taxon>
        <taxon>Drosophila</taxon>
        <taxon>Hawaiian Drosophila</taxon>
    </lineage>
</organism>
<feature type="chain" id="PRO_0000382731" description="MAU2 chromatid cohesion factor homolog">
    <location>
        <begin position="1"/>
        <end position="623"/>
    </location>
</feature>
<feature type="repeat" description="TPR 1">
    <location>
        <begin position="96"/>
        <end position="129"/>
    </location>
</feature>
<feature type="repeat" description="TPR 2">
    <location>
        <begin position="451"/>
        <end position="484"/>
    </location>
</feature>
<feature type="repeat" description="TPR 3">
    <location>
        <begin position="491"/>
        <end position="524"/>
    </location>
</feature>